<accession>P57972</accession>
<dbReference type="EMBL" id="AE004439">
    <property type="protein sequence ID" value="AAK03914.1"/>
    <property type="molecule type" value="Genomic_DNA"/>
</dbReference>
<dbReference type="RefSeq" id="WP_005724843.1">
    <property type="nucleotide sequence ID" value="NC_002663.1"/>
</dbReference>
<dbReference type="SMR" id="P57972"/>
<dbReference type="STRING" id="272843.PM1830"/>
<dbReference type="EnsemblBacteria" id="AAK03914">
    <property type="protein sequence ID" value="AAK03914"/>
    <property type="gene ID" value="PM1830"/>
</dbReference>
<dbReference type="KEGG" id="pmu:PM1830"/>
<dbReference type="PATRIC" id="fig|272843.6.peg.1854"/>
<dbReference type="HOGENOM" id="CLU_002472_4_0_6"/>
<dbReference type="OrthoDB" id="9802448at2"/>
<dbReference type="Proteomes" id="UP000000809">
    <property type="component" value="Chromosome"/>
</dbReference>
<dbReference type="GO" id="GO:0005829">
    <property type="term" value="C:cytosol"/>
    <property type="evidence" value="ECO:0007669"/>
    <property type="project" value="TreeGrafter"/>
</dbReference>
<dbReference type="GO" id="GO:0005524">
    <property type="term" value="F:ATP binding"/>
    <property type="evidence" value="ECO:0007669"/>
    <property type="project" value="UniProtKB-UniRule"/>
</dbReference>
<dbReference type="GO" id="GO:0140664">
    <property type="term" value="F:ATP-dependent DNA damage sensor activity"/>
    <property type="evidence" value="ECO:0007669"/>
    <property type="project" value="InterPro"/>
</dbReference>
<dbReference type="GO" id="GO:0003684">
    <property type="term" value="F:damaged DNA binding"/>
    <property type="evidence" value="ECO:0007669"/>
    <property type="project" value="UniProtKB-UniRule"/>
</dbReference>
<dbReference type="GO" id="GO:0030983">
    <property type="term" value="F:mismatched DNA binding"/>
    <property type="evidence" value="ECO:0007669"/>
    <property type="project" value="InterPro"/>
</dbReference>
<dbReference type="GO" id="GO:0006298">
    <property type="term" value="P:mismatch repair"/>
    <property type="evidence" value="ECO:0007669"/>
    <property type="project" value="UniProtKB-UniRule"/>
</dbReference>
<dbReference type="CDD" id="cd03284">
    <property type="entry name" value="ABC_MutS1"/>
    <property type="match status" value="1"/>
</dbReference>
<dbReference type="FunFam" id="1.10.1420.10:FF:000002">
    <property type="entry name" value="DNA mismatch repair protein MutS"/>
    <property type="match status" value="1"/>
</dbReference>
<dbReference type="FunFam" id="3.30.420.110:FF:000001">
    <property type="entry name" value="DNA mismatch repair protein MutS"/>
    <property type="match status" value="1"/>
</dbReference>
<dbReference type="FunFam" id="3.40.1170.10:FF:000001">
    <property type="entry name" value="DNA mismatch repair protein MutS"/>
    <property type="match status" value="1"/>
</dbReference>
<dbReference type="FunFam" id="3.40.50.300:FF:000283">
    <property type="entry name" value="DNA mismatch repair protein MutS"/>
    <property type="match status" value="1"/>
</dbReference>
<dbReference type="Gene3D" id="1.10.1420.10">
    <property type="match status" value="2"/>
</dbReference>
<dbReference type="Gene3D" id="6.10.140.430">
    <property type="match status" value="1"/>
</dbReference>
<dbReference type="Gene3D" id="3.40.1170.10">
    <property type="entry name" value="DNA repair protein MutS, domain I"/>
    <property type="match status" value="1"/>
</dbReference>
<dbReference type="Gene3D" id="3.30.420.110">
    <property type="entry name" value="MutS, connector domain"/>
    <property type="match status" value="1"/>
</dbReference>
<dbReference type="Gene3D" id="3.40.50.300">
    <property type="entry name" value="P-loop containing nucleotide triphosphate hydrolases"/>
    <property type="match status" value="1"/>
</dbReference>
<dbReference type="HAMAP" id="MF_00096">
    <property type="entry name" value="MutS"/>
    <property type="match status" value="1"/>
</dbReference>
<dbReference type="InterPro" id="IPR005748">
    <property type="entry name" value="DNA_mismatch_repair_MutS"/>
</dbReference>
<dbReference type="InterPro" id="IPR007695">
    <property type="entry name" value="DNA_mismatch_repair_MutS-lik_N"/>
</dbReference>
<dbReference type="InterPro" id="IPR017261">
    <property type="entry name" value="DNA_mismatch_repair_MutS/MSH"/>
</dbReference>
<dbReference type="InterPro" id="IPR000432">
    <property type="entry name" value="DNA_mismatch_repair_MutS_C"/>
</dbReference>
<dbReference type="InterPro" id="IPR007861">
    <property type="entry name" value="DNA_mismatch_repair_MutS_clamp"/>
</dbReference>
<dbReference type="InterPro" id="IPR007696">
    <property type="entry name" value="DNA_mismatch_repair_MutS_core"/>
</dbReference>
<dbReference type="InterPro" id="IPR016151">
    <property type="entry name" value="DNA_mismatch_repair_MutS_N"/>
</dbReference>
<dbReference type="InterPro" id="IPR036187">
    <property type="entry name" value="DNA_mismatch_repair_MutS_sf"/>
</dbReference>
<dbReference type="InterPro" id="IPR007860">
    <property type="entry name" value="DNA_mmatch_repair_MutS_con_dom"/>
</dbReference>
<dbReference type="InterPro" id="IPR045076">
    <property type="entry name" value="MutS"/>
</dbReference>
<dbReference type="InterPro" id="IPR036678">
    <property type="entry name" value="MutS_con_dom_sf"/>
</dbReference>
<dbReference type="InterPro" id="IPR027417">
    <property type="entry name" value="P-loop_NTPase"/>
</dbReference>
<dbReference type="NCBIfam" id="TIGR01070">
    <property type="entry name" value="mutS1"/>
    <property type="match status" value="1"/>
</dbReference>
<dbReference type="NCBIfam" id="NF003810">
    <property type="entry name" value="PRK05399.1"/>
    <property type="match status" value="1"/>
</dbReference>
<dbReference type="PANTHER" id="PTHR11361:SF34">
    <property type="entry name" value="DNA MISMATCH REPAIR PROTEIN MSH1, MITOCHONDRIAL"/>
    <property type="match status" value="1"/>
</dbReference>
<dbReference type="PANTHER" id="PTHR11361">
    <property type="entry name" value="DNA MISMATCH REPAIR PROTEIN MUTS FAMILY MEMBER"/>
    <property type="match status" value="1"/>
</dbReference>
<dbReference type="Pfam" id="PF01624">
    <property type="entry name" value="MutS_I"/>
    <property type="match status" value="1"/>
</dbReference>
<dbReference type="Pfam" id="PF05188">
    <property type="entry name" value="MutS_II"/>
    <property type="match status" value="1"/>
</dbReference>
<dbReference type="Pfam" id="PF05192">
    <property type="entry name" value="MutS_III"/>
    <property type="match status" value="1"/>
</dbReference>
<dbReference type="Pfam" id="PF05190">
    <property type="entry name" value="MutS_IV"/>
    <property type="match status" value="1"/>
</dbReference>
<dbReference type="Pfam" id="PF00488">
    <property type="entry name" value="MutS_V"/>
    <property type="match status" value="1"/>
</dbReference>
<dbReference type="PIRSF" id="PIRSF037677">
    <property type="entry name" value="DNA_mis_repair_Msh6"/>
    <property type="match status" value="1"/>
</dbReference>
<dbReference type="SMART" id="SM00534">
    <property type="entry name" value="MUTSac"/>
    <property type="match status" value="1"/>
</dbReference>
<dbReference type="SMART" id="SM00533">
    <property type="entry name" value="MUTSd"/>
    <property type="match status" value="1"/>
</dbReference>
<dbReference type="SUPFAM" id="SSF55271">
    <property type="entry name" value="DNA repair protein MutS, domain I"/>
    <property type="match status" value="1"/>
</dbReference>
<dbReference type="SUPFAM" id="SSF53150">
    <property type="entry name" value="DNA repair protein MutS, domain II"/>
    <property type="match status" value="1"/>
</dbReference>
<dbReference type="SUPFAM" id="SSF48334">
    <property type="entry name" value="DNA repair protein MutS, domain III"/>
    <property type="match status" value="1"/>
</dbReference>
<dbReference type="SUPFAM" id="SSF52540">
    <property type="entry name" value="P-loop containing nucleoside triphosphate hydrolases"/>
    <property type="match status" value="1"/>
</dbReference>
<dbReference type="PROSITE" id="PS00486">
    <property type="entry name" value="DNA_MISMATCH_REPAIR_2"/>
    <property type="match status" value="1"/>
</dbReference>
<keyword id="KW-0067">ATP-binding</keyword>
<keyword id="KW-0227">DNA damage</keyword>
<keyword id="KW-0234">DNA repair</keyword>
<keyword id="KW-0238">DNA-binding</keyword>
<keyword id="KW-0547">Nucleotide-binding</keyword>
<keyword id="KW-1185">Reference proteome</keyword>
<feature type="chain" id="PRO_0000115115" description="DNA mismatch repair protein MutS">
    <location>
        <begin position="1"/>
        <end position="860"/>
    </location>
</feature>
<feature type="binding site" evidence="2">
    <location>
        <begin position="613"/>
        <end position="620"/>
    </location>
    <ligand>
        <name>ATP</name>
        <dbReference type="ChEBI" id="CHEBI:30616"/>
    </ligand>
</feature>
<protein>
    <recommendedName>
        <fullName>DNA mismatch repair protein MutS</fullName>
    </recommendedName>
</protein>
<organism>
    <name type="scientific">Pasteurella multocida (strain Pm70)</name>
    <dbReference type="NCBI Taxonomy" id="272843"/>
    <lineage>
        <taxon>Bacteria</taxon>
        <taxon>Pseudomonadati</taxon>
        <taxon>Pseudomonadota</taxon>
        <taxon>Gammaproteobacteria</taxon>
        <taxon>Pasteurellales</taxon>
        <taxon>Pasteurellaceae</taxon>
        <taxon>Pasteurella</taxon>
    </lineage>
</organism>
<evidence type="ECO:0000250" key="1"/>
<evidence type="ECO:0000255" key="2"/>
<evidence type="ECO:0000305" key="3"/>
<proteinExistence type="inferred from homology"/>
<reference key="1">
    <citation type="journal article" date="2001" name="Proc. Natl. Acad. Sci. U.S.A.">
        <title>Complete genomic sequence of Pasteurella multocida Pm70.</title>
        <authorList>
            <person name="May B.J."/>
            <person name="Zhang Q."/>
            <person name="Li L.L."/>
            <person name="Paustian M.L."/>
            <person name="Whittam T.S."/>
            <person name="Kapur V."/>
        </authorList>
    </citation>
    <scope>NUCLEOTIDE SEQUENCE [LARGE SCALE GENOMIC DNA]</scope>
    <source>
        <strain>Pm70</strain>
    </source>
</reference>
<gene>
    <name type="primary">mutS</name>
    <name type="ordered locus">PM1830</name>
</gene>
<comment type="function">
    <text evidence="1">This protein is involved in the repair of mismatches in DNA. It is possible that it carries out the mismatch recognition step. This protein has a weak ATPase activity (By similarity).</text>
</comment>
<comment type="similarity">
    <text evidence="3">Belongs to the DNA mismatch repair MutS family.</text>
</comment>
<name>MUTS_PASMU</name>
<sequence>MDNLDLHTPMMRQYLALKAENPDILLFYRMGDFYELFYDDAKKAAALLDISLTKRGQSAGQPIPMAGVPYHAVEGYLAKLVQLGESVAICEQVGDPATSKGPVERQVVRIVTPGTVSDESLLPERQDNLIATVYQEKDRFGLAVLDITSGRFQISEPEDRASLQAELQRISPVELLYCEDFVDMALLEPFKGLRRRPIWEFELGTAIQLLNRQFHTKDLRGFGVEKAILGLCAAGCLLQYAKDTQRTALPHIQSLTLLQHSEHIQLDAATRRNLELTQNLAGGSENTLASVLDKCVTPMGSRLLKRWMHQPIRQHEKLMVRQNRITALLQQDLVAAIQPYLQQIGDMERILARVALRSARPRDLTRLRTALEQIPYLRDILAQQTSSDLTALLQPIGEFSAQLDLLQRAIIDNPPMLIRDGGVIAEGYNAELDEWRSLSDGATRYLEELEQRERESTGIDTLKIGFNAVHGYYIQISQGQAHKAPMHYVRRQTLKNAERYIIPELKTYEDKVLKAKGAALALEKQLYEQLFDELLPHLGALQLASLTLAELDVLTNLAERAETLNYVAPQFSDDIGVHIQQGRHPVVEQVLNAPFIANPVELHPQRHLLIITGPNMGGKSTYMRQTALITLMAYMGSFVPAESAVIGPIDRIFTRIGASDDLASGRSTFMVEMTEMANILHQATANSLVLIDEIGRGTSTYDGLSLAWACAEWLAKKLRSLTLFATHYFELTVLPEQLAGSANVHLDAIEHNDTIAFMHAVQEGAASKSYGLAVAALAGVPQSVIKLAKQKLAQLEKLSQQNADQRIQDLRQLNQTQGELALMEEDDSKTAVWEMLEKLDPDELSPKQALAYLYQLKKLV</sequence>